<feature type="chain" id="PRO_0000066246" description="Uncharacterized 50.6 kDa protein in the 5'region of gyrA and gyrB">
    <location>
        <begin position="1"/>
        <end position="437"/>
    </location>
</feature>
<feature type="region of interest" description="Disordered" evidence="1">
    <location>
        <begin position="1"/>
        <end position="31"/>
    </location>
</feature>
<feature type="region of interest" description="Disordered" evidence="1">
    <location>
        <begin position="77"/>
        <end position="437"/>
    </location>
</feature>
<feature type="compositionally biased region" description="Basic residues" evidence="1">
    <location>
        <begin position="1"/>
        <end position="29"/>
    </location>
</feature>
<feature type="compositionally biased region" description="Basic residues" evidence="1">
    <location>
        <begin position="81"/>
        <end position="91"/>
    </location>
</feature>
<feature type="compositionally biased region" description="Basic residues" evidence="1">
    <location>
        <begin position="101"/>
        <end position="118"/>
    </location>
</feature>
<feature type="compositionally biased region" description="Basic and acidic residues" evidence="1">
    <location>
        <begin position="119"/>
        <end position="132"/>
    </location>
</feature>
<feature type="compositionally biased region" description="Basic residues" evidence="1">
    <location>
        <begin position="133"/>
        <end position="142"/>
    </location>
</feature>
<feature type="compositionally biased region" description="Basic and acidic residues" evidence="1">
    <location>
        <begin position="143"/>
        <end position="164"/>
    </location>
</feature>
<feature type="compositionally biased region" description="Basic residues" evidence="1">
    <location>
        <begin position="165"/>
        <end position="190"/>
    </location>
</feature>
<feature type="compositionally biased region" description="Basic and acidic residues" evidence="1">
    <location>
        <begin position="198"/>
        <end position="209"/>
    </location>
</feature>
<feature type="compositionally biased region" description="Basic and acidic residues" evidence="1">
    <location>
        <begin position="217"/>
        <end position="253"/>
    </location>
</feature>
<feature type="compositionally biased region" description="Basic residues" evidence="1">
    <location>
        <begin position="284"/>
        <end position="293"/>
    </location>
</feature>
<feature type="compositionally biased region" description="Basic residues" evidence="1">
    <location>
        <begin position="324"/>
        <end position="348"/>
    </location>
</feature>
<feature type="compositionally biased region" description="Low complexity" evidence="1">
    <location>
        <begin position="371"/>
        <end position="382"/>
    </location>
</feature>
<dbReference type="EMBL" id="M38373">
    <property type="status" value="NOT_ANNOTATED_CDS"/>
    <property type="molecule type" value="Genomic_DNA"/>
</dbReference>
<name>YGY3_HALL2</name>
<protein>
    <recommendedName>
        <fullName>Uncharacterized 50.6 kDa protein in the 5'region of gyrA and gyrB</fullName>
    </recommendedName>
    <alternativeName>
        <fullName>ORF 3</fullName>
    </alternativeName>
</protein>
<proteinExistence type="predicted"/>
<reference key="1">
    <citation type="journal article" date="1991" name="J. Bacteriol.">
        <title>Mutations in DNA gyrase result in novobiocin resistance in halophilic archaebacteria.</title>
        <authorList>
            <person name="Holmes M.L."/>
            <person name="Dyall-Smith M.L."/>
        </authorList>
    </citation>
    <scope>NUCLEOTIDE SEQUENCE [GENOMIC DNA]</scope>
    <source>
        <strain>DSM 14919 / CCM 7023 / CIP 107410 / JCM 9276 / NCIMB 13854 / Aa 2.2</strain>
    </source>
</reference>
<sequence>MDTPLRGRRAAGRGVRARARPRTRRRHRNDHPLLAGRRYLRDDRVRLQDARKPPARARVPQLRGRDFALRRADRRVEHVPLRGRHPRVRRVPQRDQDGAPRRRHLLRRRVGGHRGRNRHAGDRRAPGVDSRLRQQHQHPRGRHASDRVQDGAHPRRQRLREQPRHAGRPRRRQPPRRGRSRGTHRRHLRQAPRPAVRGPDEDQAREFRGPRHRRERHPPTARDVLRGEPGHGDGHHLEGRRGRPRPQGREAGRGAHPPQVRARIYLAAGEARGLPEPRPLGVRTVHRGGRLRGRVGQAGPRPQVPGDFAPQGEDSERRETPPRPHSRKRRDTGAHHRHWRRRRRRVRHREGALPAAHPDDRRRRRRRAHPDAAAYASVPAHAPAHRGRLRVRGSTAAVPRPLPRQHLRRDGRGRAGPHHRGGMQRQPHAGPAVQGTR</sequence>
<organism>
    <name type="scientific">Haloferax lucentense (strain DSM 14919 / JCM 9276 / NCIMB 13854 / Aa 2.2)</name>
    <name type="common">Haloferax alicantei</name>
    <dbReference type="NCBI Taxonomy" id="1230452"/>
    <lineage>
        <taxon>Archaea</taxon>
        <taxon>Methanobacteriati</taxon>
        <taxon>Methanobacteriota</taxon>
        <taxon>Stenosarchaea group</taxon>
        <taxon>Halobacteria</taxon>
        <taxon>Halobacteriales</taxon>
        <taxon>Haloferacaceae</taxon>
        <taxon>Haloferax</taxon>
    </lineage>
</organism>
<evidence type="ECO:0000256" key="1">
    <source>
        <dbReference type="SAM" id="MobiDB-lite"/>
    </source>
</evidence>
<accession>P21561</accession>